<name>SUFE_YERPN</name>
<protein>
    <recommendedName>
        <fullName evidence="1">Cysteine desulfuration protein SufE</fullName>
    </recommendedName>
</protein>
<gene>
    <name evidence="1" type="primary">sufE</name>
    <name type="ordered locus">YPN_1854</name>
    <name type="ORF">YP516_2062</name>
</gene>
<keyword id="KW-0963">Cytoplasm</keyword>
<sequence>MAGLPDRDKLIRNFSRCLNWEEKYLYIIELGGQLAPLTEQQRHPENLISGCQSQVWIAMTLSAEGHVIFAGDSDAAIVKGLVAVVFILYHDLTPQQIISLDVRPFFADLALSQHLTPSRSQGLEAMIRAIRTKVANLSAH</sequence>
<feature type="chain" id="PRO_1000070454" description="Cysteine desulfuration protein SufE">
    <location>
        <begin position="1"/>
        <end position="140"/>
    </location>
</feature>
<feature type="active site" description="Cysteine persulfide intermediate" evidence="1">
    <location>
        <position position="51"/>
    </location>
</feature>
<reference key="1">
    <citation type="journal article" date="2006" name="J. Bacteriol.">
        <title>Complete genome sequence of Yersinia pestis strains Antiqua and Nepal516: evidence of gene reduction in an emerging pathogen.</title>
        <authorList>
            <person name="Chain P.S.G."/>
            <person name="Hu P."/>
            <person name="Malfatti S.A."/>
            <person name="Radnedge L."/>
            <person name="Larimer F."/>
            <person name="Vergez L.M."/>
            <person name="Worsham P."/>
            <person name="Chu M.C."/>
            <person name="Andersen G.L."/>
        </authorList>
    </citation>
    <scope>NUCLEOTIDE SEQUENCE [LARGE SCALE GENOMIC DNA]</scope>
    <source>
        <strain>Nepal516</strain>
    </source>
</reference>
<reference key="2">
    <citation type="submission" date="2009-04" db="EMBL/GenBank/DDBJ databases">
        <title>Yersinia pestis Nepal516A whole genome shotgun sequencing project.</title>
        <authorList>
            <person name="Plunkett G. III"/>
            <person name="Anderson B.D."/>
            <person name="Baumler D.J."/>
            <person name="Burland V."/>
            <person name="Cabot E.L."/>
            <person name="Glasner J.D."/>
            <person name="Mau B."/>
            <person name="Neeno-Eckwall E."/>
            <person name="Perna N.T."/>
            <person name="Munk A.C."/>
            <person name="Tapia R."/>
            <person name="Green L.D."/>
            <person name="Rogers Y.C."/>
            <person name="Detter J.C."/>
            <person name="Bruce D.C."/>
            <person name="Brettin T.S."/>
        </authorList>
    </citation>
    <scope>NUCLEOTIDE SEQUENCE [LARGE SCALE GENOMIC DNA]</scope>
    <source>
        <strain>Nepal516</strain>
    </source>
</reference>
<accession>Q1CIJ7</accession>
<accession>C4GTF8</accession>
<proteinExistence type="inferred from homology"/>
<dbReference type="EMBL" id="CP000305">
    <property type="protein sequence ID" value="ABG18183.1"/>
    <property type="molecule type" value="Genomic_DNA"/>
</dbReference>
<dbReference type="EMBL" id="ACNQ01000010">
    <property type="protein sequence ID" value="EEO76759.1"/>
    <property type="molecule type" value="Genomic_DNA"/>
</dbReference>
<dbReference type="RefSeq" id="WP_002211804.1">
    <property type="nucleotide sequence ID" value="NZ_ACNQ01000010.1"/>
</dbReference>
<dbReference type="SMR" id="Q1CIJ7"/>
<dbReference type="GeneID" id="57976275"/>
<dbReference type="KEGG" id="ypn:YPN_1854"/>
<dbReference type="HOGENOM" id="CLU_124502_1_1_6"/>
<dbReference type="UniPathway" id="UPA00266"/>
<dbReference type="Proteomes" id="UP000008936">
    <property type="component" value="Chromosome"/>
</dbReference>
<dbReference type="GO" id="GO:0005737">
    <property type="term" value="C:cytoplasm"/>
    <property type="evidence" value="ECO:0007669"/>
    <property type="project" value="UniProtKB-SubCell"/>
</dbReference>
<dbReference type="GO" id="GO:0016226">
    <property type="term" value="P:iron-sulfur cluster assembly"/>
    <property type="evidence" value="ECO:0007669"/>
    <property type="project" value="InterPro"/>
</dbReference>
<dbReference type="GO" id="GO:0006790">
    <property type="term" value="P:sulfur compound metabolic process"/>
    <property type="evidence" value="ECO:0007669"/>
    <property type="project" value="InterPro"/>
</dbReference>
<dbReference type="Gene3D" id="3.90.1010.10">
    <property type="match status" value="1"/>
</dbReference>
<dbReference type="HAMAP" id="MF_01832">
    <property type="entry name" value="SufE"/>
    <property type="match status" value="1"/>
</dbReference>
<dbReference type="InterPro" id="IPR023939">
    <property type="entry name" value="Cysteine_desulfuration_SufE"/>
</dbReference>
<dbReference type="InterPro" id="IPR003808">
    <property type="entry name" value="Fe-S_metab-assoc_dom"/>
</dbReference>
<dbReference type="NCBIfam" id="NF006792">
    <property type="entry name" value="PRK09296.1"/>
    <property type="match status" value="1"/>
</dbReference>
<dbReference type="PANTHER" id="PTHR43597:SF3">
    <property type="entry name" value="CYSTEINE DESULFURATION PROTEIN SUFE"/>
    <property type="match status" value="1"/>
</dbReference>
<dbReference type="PANTHER" id="PTHR43597">
    <property type="entry name" value="SULFUR ACCEPTOR PROTEIN CSDE"/>
    <property type="match status" value="1"/>
</dbReference>
<dbReference type="Pfam" id="PF02657">
    <property type="entry name" value="SufE"/>
    <property type="match status" value="1"/>
</dbReference>
<dbReference type="SUPFAM" id="SSF82649">
    <property type="entry name" value="SufE/NifU"/>
    <property type="match status" value="1"/>
</dbReference>
<organism>
    <name type="scientific">Yersinia pestis bv. Antiqua (strain Nepal516)</name>
    <dbReference type="NCBI Taxonomy" id="377628"/>
    <lineage>
        <taxon>Bacteria</taxon>
        <taxon>Pseudomonadati</taxon>
        <taxon>Pseudomonadota</taxon>
        <taxon>Gammaproteobacteria</taxon>
        <taxon>Enterobacterales</taxon>
        <taxon>Yersiniaceae</taxon>
        <taxon>Yersinia</taxon>
    </lineage>
</organism>
<comment type="function">
    <text evidence="1">Participates in cysteine desulfuration mediated by SufS. Cysteine desulfuration mobilizes sulfur from L-cysteine to yield L-alanine and constitutes an essential step in sulfur metabolism for biosynthesis of a variety of sulfur-containing biomolecules. Functions as a sulfur acceptor for SufS, by mediating the direct transfer of the sulfur atom from the S-sulfanylcysteine of SufS, an intermediate product of cysteine desulfuration process.</text>
</comment>
<comment type="pathway">
    <text evidence="1">Cofactor biosynthesis; iron-sulfur cluster biosynthesis.</text>
</comment>
<comment type="subunit">
    <text evidence="1">Homodimer. Interacts with SufS.</text>
</comment>
<comment type="subcellular location">
    <subcellularLocation>
        <location evidence="1">Cytoplasm</location>
    </subcellularLocation>
</comment>
<comment type="similarity">
    <text evidence="1">Belongs to the SufE family.</text>
</comment>
<evidence type="ECO:0000255" key="1">
    <source>
        <dbReference type="HAMAP-Rule" id="MF_01832"/>
    </source>
</evidence>